<accession>Q5QY61</accession>
<feature type="chain" id="PRO_0000229167" description="tRNA (guanine-N(7)-)-methyltransferase">
    <location>
        <begin position="1"/>
        <end position="245"/>
    </location>
</feature>
<feature type="region of interest" description="Disordered" evidence="3">
    <location>
        <begin position="200"/>
        <end position="225"/>
    </location>
</feature>
<feature type="compositionally biased region" description="Basic and acidic residues" evidence="3">
    <location>
        <begin position="209"/>
        <end position="225"/>
    </location>
</feature>
<feature type="active site" evidence="1">
    <location>
        <position position="144"/>
    </location>
</feature>
<feature type="binding site" evidence="2">
    <location>
        <position position="69"/>
    </location>
    <ligand>
        <name>S-adenosyl-L-methionine</name>
        <dbReference type="ChEBI" id="CHEBI:59789"/>
    </ligand>
</feature>
<feature type="binding site" evidence="2">
    <location>
        <position position="94"/>
    </location>
    <ligand>
        <name>S-adenosyl-L-methionine</name>
        <dbReference type="ChEBI" id="CHEBI:59789"/>
    </ligand>
</feature>
<feature type="binding site" evidence="2">
    <location>
        <position position="121"/>
    </location>
    <ligand>
        <name>S-adenosyl-L-methionine</name>
        <dbReference type="ChEBI" id="CHEBI:59789"/>
    </ligand>
</feature>
<feature type="binding site" evidence="2">
    <location>
        <position position="144"/>
    </location>
    <ligand>
        <name>S-adenosyl-L-methionine</name>
        <dbReference type="ChEBI" id="CHEBI:59789"/>
    </ligand>
</feature>
<feature type="binding site" evidence="2">
    <location>
        <position position="148"/>
    </location>
    <ligand>
        <name>substrate</name>
    </ligand>
</feature>
<feature type="binding site" evidence="2">
    <location>
        <position position="180"/>
    </location>
    <ligand>
        <name>substrate</name>
    </ligand>
</feature>
<feature type="binding site" evidence="2">
    <location>
        <begin position="217"/>
        <end position="220"/>
    </location>
    <ligand>
        <name>substrate</name>
    </ligand>
</feature>
<reference key="1">
    <citation type="journal article" date="2004" name="Proc. Natl. Acad. Sci. U.S.A.">
        <title>Genome sequence of the deep-sea gamma-proteobacterium Idiomarina loihiensis reveals amino acid fermentation as a source of carbon and energy.</title>
        <authorList>
            <person name="Hou S."/>
            <person name="Saw J.H."/>
            <person name="Lee K.S."/>
            <person name="Freitas T.A."/>
            <person name="Belisle C."/>
            <person name="Kawarabayasi Y."/>
            <person name="Donachie S.P."/>
            <person name="Pikina A."/>
            <person name="Galperin M.Y."/>
            <person name="Koonin E.V."/>
            <person name="Makarova K.S."/>
            <person name="Omelchenko M.V."/>
            <person name="Sorokin A."/>
            <person name="Wolf Y.I."/>
            <person name="Li Q.X."/>
            <person name="Keum Y.S."/>
            <person name="Campbell S."/>
            <person name="Denery J."/>
            <person name="Aizawa S."/>
            <person name="Shibata S."/>
            <person name="Malahoff A."/>
            <person name="Alam M."/>
        </authorList>
    </citation>
    <scope>NUCLEOTIDE SEQUENCE [LARGE SCALE GENOMIC DNA]</scope>
    <source>
        <strain>ATCC BAA-735 / DSM 15497 / L2-TR</strain>
    </source>
</reference>
<protein>
    <recommendedName>
        <fullName evidence="2">tRNA (guanine-N(7)-)-methyltransferase</fullName>
        <ecNumber evidence="2">2.1.1.33</ecNumber>
    </recommendedName>
    <alternativeName>
        <fullName evidence="2">tRNA (guanine(46)-N(7))-methyltransferase</fullName>
    </alternativeName>
    <alternativeName>
        <fullName evidence="2">tRNA(m7G46)-methyltransferase</fullName>
    </alternativeName>
</protein>
<evidence type="ECO:0000250" key="1"/>
<evidence type="ECO:0000255" key="2">
    <source>
        <dbReference type="HAMAP-Rule" id="MF_01057"/>
    </source>
</evidence>
<evidence type="ECO:0000256" key="3">
    <source>
        <dbReference type="SAM" id="MobiDB-lite"/>
    </source>
</evidence>
<gene>
    <name evidence="2" type="primary">trmB</name>
    <name type="ordered locus">IL1981</name>
</gene>
<name>TRMB_IDILO</name>
<sequence>MSHFKSAEEAAAAGKYVRTVRSFVKREGRLTKGQAAAIERLWPTVGLTLENGRLDLAMVFGREAPVTLEIGFGMGHSLVEMAANAPERDFIGIEVHEPGVGACLMAAEEAGVENFRVFHEDAVEVLKQCIPDNSLNCVQIFFPDPWHKKRHHKRRIVQPEFVKLLIQKIETGGVIHLATDWENYAEHMLEVLNDEPRLTNLSSSGDYVPRPENRPKTKFERRGEGKGHGVWDLQFKTNKSATLLG</sequence>
<organism>
    <name type="scientific">Idiomarina loihiensis (strain ATCC BAA-735 / DSM 15497 / L2-TR)</name>
    <dbReference type="NCBI Taxonomy" id="283942"/>
    <lineage>
        <taxon>Bacteria</taxon>
        <taxon>Pseudomonadati</taxon>
        <taxon>Pseudomonadota</taxon>
        <taxon>Gammaproteobacteria</taxon>
        <taxon>Alteromonadales</taxon>
        <taxon>Idiomarinaceae</taxon>
        <taxon>Idiomarina</taxon>
    </lineage>
</organism>
<keyword id="KW-0489">Methyltransferase</keyword>
<keyword id="KW-1185">Reference proteome</keyword>
<keyword id="KW-0949">S-adenosyl-L-methionine</keyword>
<keyword id="KW-0808">Transferase</keyword>
<keyword id="KW-0819">tRNA processing</keyword>
<dbReference type="EC" id="2.1.1.33" evidence="2"/>
<dbReference type="EMBL" id="AE017340">
    <property type="protein sequence ID" value="AAV82813.1"/>
    <property type="molecule type" value="Genomic_DNA"/>
</dbReference>
<dbReference type="RefSeq" id="WP_011235209.1">
    <property type="nucleotide sequence ID" value="NC_006512.1"/>
</dbReference>
<dbReference type="SMR" id="Q5QY61"/>
<dbReference type="STRING" id="283942.IL1981"/>
<dbReference type="GeneID" id="41337171"/>
<dbReference type="KEGG" id="ilo:IL1981"/>
<dbReference type="eggNOG" id="COG0220">
    <property type="taxonomic scope" value="Bacteria"/>
</dbReference>
<dbReference type="HOGENOM" id="CLU_050910_0_1_6"/>
<dbReference type="OrthoDB" id="9802090at2"/>
<dbReference type="UniPathway" id="UPA00989"/>
<dbReference type="Proteomes" id="UP000001171">
    <property type="component" value="Chromosome"/>
</dbReference>
<dbReference type="GO" id="GO:0043527">
    <property type="term" value="C:tRNA methyltransferase complex"/>
    <property type="evidence" value="ECO:0007669"/>
    <property type="project" value="TreeGrafter"/>
</dbReference>
<dbReference type="GO" id="GO:0008176">
    <property type="term" value="F:tRNA (guanine(46)-N7)-methyltransferase activity"/>
    <property type="evidence" value="ECO:0007669"/>
    <property type="project" value="UniProtKB-UniRule"/>
</dbReference>
<dbReference type="CDD" id="cd02440">
    <property type="entry name" value="AdoMet_MTases"/>
    <property type="match status" value="1"/>
</dbReference>
<dbReference type="FunFam" id="3.40.50.150:FF:000035">
    <property type="entry name" value="tRNA (guanine-N(7)-)-methyltransferase"/>
    <property type="match status" value="1"/>
</dbReference>
<dbReference type="Gene3D" id="3.40.50.150">
    <property type="entry name" value="Vaccinia Virus protein VP39"/>
    <property type="match status" value="1"/>
</dbReference>
<dbReference type="HAMAP" id="MF_01057">
    <property type="entry name" value="tRNA_methyltr_TrmB"/>
    <property type="match status" value="1"/>
</dbReference>
<dbReference type="InterPro" id="IPR029063">
    <property type="entry name" value="SAM-dependent_MTases_sf"/>
</dbReference>
<dbReference type="InterPro" id="IPR003358">
    <property type="entry name" value="tRNA_(Gua-N-7)_MeTrfase_Trmb"/>
</dbReference>
<dbReference type="InterPro" id="IPR055361">
    <property type="entry name" value="tRNA_methyltr_TrmB_bact"/>
</dbReference>
<dbReference type="NCBIfam" id="TIGR00091">
    <property type="entry name" value="tRNA (guanosine(46)-N7)-methyltransferase TrmB"/>
    <property type="match status" value="1"/>
</dbReference>
<dbReference type="PANTHER" id="PTHR23417">
    <property type="entry name" value="3-DEOXY-D-MANNO-OCTULOSONIC-ACID TRANSFERASE/TRNA GUANINE-N 7 - -METHYLTRANSFERASE"/>
    <property type="match status" value="1"/>
</dbReference>
<dbReference type="PANTHER" id="PTHR23417:SF14">
    <property type="entry name" value="PENTACOTRIPEPTIDE-REPEAT REGION OF PRORP DOMAIN-CONTAINING PROTEIN"/>
    <property type="match status" value="1"/>
</dbReference>
<dbReference type="Pfam" id="PF02390">
    <property type="entry name" value="Methyltransf_4"/>
    <property type="match status" value="1"/>
</dbReference>
<dbReference type="SUPFAM" id="SSF53335">
    <property type="entry name" value="S-adenosyl-L-methionine-dependent methyltransferases"/>
    <property type="match status" value="1"/>
</dbReference>
<dbReference type="PROSITE" id="PS51625">
    <property type="entry name" value="SAM_MT_TRMB"/>
    <property type="match status" value="1"/>
</dbReference>
<proteinExistence type="inferred from homology"/>
<comment type="function">
    <text evidence="2">Catalyzes the formation of N(7)-methylguanine at position 46 (m7G46) in tRNA.</text>
</comment>
<comment type="catalytic activity">
    <reaction evidence="2">
        <text>guanosine(46) in tRNA + S-adenosyl-L-methionine = N(7)-methylguanosine(46) in tRNA + S-adenosyl-L-homocysteine</text>
        <dbReference type="Rhea" id="RHEA:42708"/>
        <dbReference type="Rhea" id="RHEA-COMP:10188"/>
        <dbReference type="Rhea" id="RHEA-COMP:10189"/>
        <dbReference type="ChEBI" id="CHEBI:57856"/>
        <dbReference type="ChEBI" id="CHEBI:59789"/>
        <dbReference type="ChEBI" id="CHEBI:74269"/>
        <dbReference type="ChEBI" id="CHEBI:74480"/>
        <dbReference type="EC" id="2.1.1.33"/>
    </reaction>
</comment>
<comment type="pathway">
    <text evidence="2">tRNA modification; N(7)-methylguanine-tRNA biosynthesis.</text>
</comment>
<comment type="similarity">
    <text evidence="2">Belongs to the class I-like SAM-binding methyltransferase superfamily. TrmB family.</text>
</comment>